<evidence type="ECO:0000255" key="1">
    <source>
        <dbReference type="HAMAP-Rule" id="MF_00199"/>
    </source>
</evidence>
<gene>
    <name evidence="1" type="primary">apaH</name>
    <name type="ordered locus">SbBS512_E0043</name>
</gene>
<name>APAH_SHIB3</name>
<reference key="1">
    <citation type="submission" date="2008-05" db="EMBL/GenBank/DDBJ databases">
        <title>Complete sequence of Shigella boydii serotype 18 strain BS512.</title>
        <authorList>
            <person name="Rasko D.A."/>
            <person name="Rosovitz M."/>
            <person name="Maurelli A.T."/>
            <person name="Myers G."/>
            <person name="Seshadri R."/>
            <person name="Cer R."/>
            <person name="Jiang L."/>
            <person name="Ravel J."/>
            <person name="Sebastian Y."/>
        </authorList>
    </citation>
    <scope>NUCLEOTIDE SEQUENCE [LARGE SCALE GENOMIC DNA]</scope>
    <source>
        <strain>CDC 3083-94 / BS512</strain>
    </source>
</reference>
<proteinExistence type="inferred from homology"/>
<comment type="function">
    <text evidence="1">Hydrolyzes diadenosine 5',5'''-P1,P4-tetraphosphate to yield ADP.</text>
</comment>
<comment type="catalytic activity">
    <reaction evidence="1">
        <text>P(1),P(4)-bis(5'-adenosyl) tetraphosphate + H2O = 2 ADP + 2 H(+)</text>
        <dbReference type="Rhea" id="RHEA:24252"/>
        <dbReference type="ChEBI" id="CHEBI:15377"/>
        <dbReference type="ChEBI" id="CHEBI:15378"/>
        <dbReference type="ChEBI" id="CHEBI:58141"/>
        <dbReference type="ChEBI" id="CHEBI:456216"/>
        <dbReference type="EC" id="3.6.1.41"/>
    </reaction>
</comment>
<comment type="similarity">
    <text evidence="1">Belongs to the Ap4A hydrolase family.</text>
</comment>
<dbReference type="EC" id="3.6.1.41" evidence="1"/>
<dbReference type="EMBL" id="CP001063">
    <property type="protein sequence ID" value="ACD08239.1"/>
    <property type="molecule type" value="Genomic_DNA"/>
</dbReference>
<dbReference type="RefSeq" id="WP_000257192.1">
    <property type="nucleotide sequence ID" value="NC_010658.1"/>
</dbReference>
<dbReference type="SMR" id="B2U257"/>
<dbReference type="STRING" id="344609.SbBS512_E0043"/>
<dbReference type="GeneID" id="93777386"/>
<dbReference type="KEGG" id="sbc:SbBS512_E0043"/>
<dbReference type="HOGENOM" id="CLU_056184_2_0_6"/>
<dbReference type="Proteomes" id="UP000001030">
    <property type="component" value="Chromosome"/>
</dbReference>
<dbReference type="GO" id="GO:0008803">
    <property type="term" value="F:bis(5'-nucleosyl)-tetraphosphatase (symmetrical) activity"/>
    <property type="evidence" value="ECO:0007669"/>
    <property type="project" value="UniProtKB-UniRule"/>
</dbReference>
<dbReference type="CDD" id="cd07422">
    <property type="entry name" value="MPP_ApaH"/>
    <property type="match status" value="1"/>
</dbReference>
<dbReference type="FunFam" id="3.60.21.10:FF:000013">
    <property type="entry name" value="Bis(5'-nucleosyl)-tetraphosphatase, symmetrical"/>
    <property type="match status" value="1"/>
</dbReference>
<dbReference type="Gene3D" id="3.60.21.10">
    <property type="match status" value="1"/>
</dbReference>
<dbReference type="HAMAP" id="MF_00199">
    <property type="entry name" value="ApaH"/>
    <property type="match status" value="1"/>
</dbReference>
<dbReference type="InterPro" id="IPR004617">
    <property type="entry name" value="ApaH"/>
</dbReference>
<dbReference type="InterPro" id="IPR004843">
    <property type="entry name" value="Calcineurin-like_PHP_ApaH"/>
</dbReference>
<dbReference type="InterPro" id="IPR029052">
    <property type="entry name" value="Metallo-depent_PP-like"/>
</dbReference>
<dbReference type="NCBIfam" id="TIGR00668">
    <property type="entry name" value="apaH"/>
    <property type="match status" value="1"/>
</dbReference>
<dbReference type="NCBIfam" id="NF001204">
    <property type="entry name" value="PRK00166.1"/>
    <property type="match status" value="1"/>
</dbReference>
<dbReference type="PANTHER" id="PTHR40942">
    <property type="match status" value="1"/>
</dbReference>
<dbReference type="PANTHER" id="PTHR40942:SF4">
    <property type="entry name" value="CYTOCHROME C5"/>
    <property type="match status" value="1"/>
</dbReference>
<dbReference type="Pfam" id="PF00149">
    <property type="entry name" value="Metallophos"/>
    <property type="match status" value="1"/>
</dbReference>
<dbReference type="PIRSF" id="PIRSF000903">
    <property type="entry name" value="B5n-ttraPtase_sm"/>
    <property type="match status" value="1"/>
</dbReference>
<dbReference type="SUPFAM" id="SSF56300">
    <property type="entry name" value="Metallo-dependent phosphatases"/>
    <property type="match status" value="1"/>
</dbReference>
<keyword id="KW-0378">Hydrolase</keyword>
<keyword id="KW-1185">Reference proteome</keyword>
<protein>
    <recommendedName>
        <fullName evidence="1">Bis(5'-nucleosyl)-tetraphosphatase, symmetrical</fullName>
        <ecNumber evidence="1">3.6.1.41</ecNumber>
    </recommendedName>
    <alternativeName>
        <fullName evidence="1">Ap4A hydrolase</fullName>
    </alternativeName>
    <alternativeName>
        <fullName evidence="1">Diadenosine 5',5'''-P1,P4-tetraphosphate pyrophosphohydrolase</fullName>
    </alternativeName>
    <alternativeName>
        <fullName evidence="1">Diadenosine tetraphosphatase</fullName>
    </alternativeName>
</protein>
<feature type="chain" id="PRO_1000099338" description="Bis(5'-nucleosyl)-tetraphosphatase, symmetrical">
    <location>
        <begin position="1"/>
        <end position="280"/>
    </location>
</feature>
<organism>
    <name type="scientific">Shigella boydii serotype 18 (strain CDC 3083-94 / BS512)</name>
    <dbReference type="NCBI Taxonomy" id="344609"/>
    <lineage>
        <taxon>Bacteria</taxon>
        <taxon>Pseudomonadati</taxon>
        <taxon>Pseudomonadota</taxon>
        <taxon>Gammaproteobacteria</taxon>
        <taxon>Enterobacterales</taxon>
        <taxon>Enterobacteriaceae</taxon>
        <taxon>Shigella</taxon>
    </lineage>
</organism>
<accession>B2U257</accession>
<sequence length="280" mass="31297">MATYLIGDVHGCYDELIALLHKVEFTPGKDTLWLTGDLVARGPGSLDVLRYVKSLGDSVRLVLGNHDLHLLAVFAGISRNKPKDRLTPLLEAPDADELLNWLRRQPLLQIDEEKKLVMAHAGITPQWDLQTAKECARDVEAVLSSDSYPFFLDAMYGDMPNNWSPELRGLGRLRFITNAFTRMRFCFPNGQLDMYSKESPEEAPAPLKPWFAIPGPVAEEYSIAFGHWASLEGKGTPEGIYALDTGCCWGGTLTCLRWEDKQYFVQPSNRHKDLGEAAAS</sequence>